<protein>
    <recommendedName>
        <fullName evidence="1">Sulfur carrier protein TusA</fullName>
    </recommendedName>
</protein>
<reference key="1">
    <citation type="journal article" date="2005" name="Science">
        <title>Life at depth: Photobacterium profundum genome sequence and expression analysis.</title>
        <authorList>
            <person name="Vezzi A."/>
            <person name="Campanaro S."/>
            <person name="D'Angelo M."/>
            <person name="Simonato F."/>
            <person name="Vitulo N."/>
            <person name="Lauro F.M."/>
            <person name="Cestaro A."/>
            <person name="Malacrida G."/>
            <person name="Simionati B."/>
            <person name="Cannata N."/>
            <person name="Romualdi C."/>
            <person name="Bartlett D.H."/>
            <person name="Valle G."/>
        </authorList>
    </citation>
    <scope>NUCLEOTIDE SEQUENCE [LARGE SCALE GENOMIC DNA]</scope>
    <source>
        <strain>ATCC BAA-1253 / SS9</strain>
    </source>
</reference>
<accession>Q6LW10</accession>
<feature type="chain" id="PRO_0000159044" description="Sulfur carrier protein TusA">
    <location>
        <begin position="1"/>
        <end position="82"/>
    </location>
</feature>
<feature type="active site" description="Cysteine persulfide intermediate" evidence="1">
    <location>
        <position position="19"/>
    </location>
</feature>
<dbReference type="EMBL" id="CR378663">
    <property type="protein sequence ID" value="CAG18515.1"/>
    <property type="molecule type" value="Genomic_DNA"/>
</dbReference>
<dbReference type="RefSeq" id="WP_011216896.1">
    <property type="nucleotide sequence ID" value="NC_006370.1"/>
</dbReference>
<dbReference type="SMR" id="Q6LW10"/>
<dbReference type="STRING" id="298386.PBPRA0060"/>
<dbReference type="KEGG" id="ppr:PBPRA0060"/>
<dbReference type="eggNOG" id="COG0425">
    <property type="taxonomic scope" value="Bacteria"/>
</dbReference>
<dbReference type="HOGENOM" id="CLU_165255_5_0_6"/>
<dbReference type="Proteomes" id="UP000000593">
    <property type="component" value="Chromosome 1"/>
</dbReference>
<dbReference type="GO" id="GO:0005737">
    <property type="term" value="C:cytoplasm"/>
    <property type="evidence" value="ECO:0007669"/>
    <property type="project" value="UniProtKB-SubCell"/>
</dbReference>
<dbReference type="GO" id="GO:0097163">
    <property type="term" value="F:sulfur carrier activity"/>
    <property type="evidence" value="ECO:0007669"/>
    <property type="project" value="UniProtKB-UniRule"/>
</dbReference>
<dbReference type="GO" id="GO:0002143">
    <property type="term" value="P:tRNA wobble position uridine thiolation"/>
    <property type="evidence" value="ECO:0007669"/>
    <property type="project" value="InterPro"/>
</dbReference>
<dbReference type="CDD" id="cd03423">
    <property type="entry name" value="SirA"/>
    <property type="match status" value="1"/>
</dbReference>
<dbReference type="Gene3D" id="3.30.110.40">
    <property type="entry name" value="TusA-like domain"/>
    <property type="match status" value="1"/>
</dbReference>
<dbReference type="HAMAP" id="MF_00413">
    <property type="entry name" value="Thiourid_synth_A"/>
    <property type="match status" value="1"/>
</dbReference>
<dbReference type="InterPro" id="IPR022931">
    <property type="entry name" value="Sulphur_carrier_TusA"/>
</dbReference>
<dbReference type="InterPro" id="IPR001455">
    <property type="entry name" value="TusA-like"/>
</dbReference>
<dbReference type="InterPro" id="IPR036868">
    <property type="entry name" value="TusA-like_sf"/>
</dbReference>
<dbReference type="NCBIfam" id="NF001423">
    <property type="entry name" value="PRK00299.1"/>
    <property type="match status" value="1"/>
</dbReference>
<dbReference type="PANTHER" id="PTHR33279:SF2">
    <property type="entry name" value="SULFUR CARRIER PROTEIN TUSA"/>
    <property type="match status" value="1"/>
</dbReference>
<dbReference type="PANTHER" id="PTHR33279">
    <property type="entry name" value="SULFUR CARRIER PROTEIN YEDF-RELATED"/>
    <property type="match status" value="1"/>
</dbReference>
<dbReference type="Pfam" id="PF01206">
    <property type="entry name" value="TusA"/>
    <property type="match status" value="1"/>
</dbReference>
<dbReference type="SUPFAM" id="SSF64307">
    <property type="entry name" value="SirA-like"/>
    <property type="match status" value="1"/>
</dbReference>
<dbReference type="PROSITE" id="PS01148">
    <property type="entry name" value="UPF0033"/>
    <property type="match status" value="1"/>
</dbReference>
<name>TUSA_PHOPR</name>
<keyword id="KW-0963">Cytoplasm</keyword>
<keyword id="KW-1185">Reference proteome</keyword>
<evidence type="ECO:0000255" key="1">
    <source>
        <dbReference type="HAMAP-Rule" id="MF_00413"/>
    </source>
</evidence>
<organism>
    <name type="scientific">Photobacterium profundum (strain SS9)</name>
    <dbReference type="NCBI Taxonomy" id="298386"/>
    <lineage>
        <taxon>Bacteria</taxon>
        <taxon>Pseudomonadati</taxon>
        <taxon>Pseudomonadota</taxon>
        <taxon>Gammaproteobacteria</taxon>
        <taxon>Vibrionales</taxon>
        <taxon>Vibrionaceae</taxon>
        <taxon>Photobacterium</taxon>
    </lineage>
</organism>
<sequence length="82" mass="9369">MTALFENPTHNLEAQGLRCPEPVMMVRKTVRKMEEGETLLILADDPSTTRDIPSFCRFMDHTLVAADTETLPYRFLIRKGSN</sequence>
<gene>
    <name evidence="1" type="primary">tusA</name>
    <name type="ordered locus">PBPRA0060</name>
</gene>
<comment type="function">
    <text evidence="1">Sulfur carrier protein which probably makes part of a sulfur-relay system.</text>
</comment>
<comment type="subcellular location">
    <subcellularLocation>
        <location evidence="1">Cytoplasm</location>
    </subcellularLocation>
</comment>
<comment type="similarity">
    <text evidence="1">Belongs to the sulfur carrier protein TusA family.</text>
</comment>
<proteinExistence type="inferred from homology"/>